<proteinExistence type="evidence at protein level"/>
<dbReference type="PIR" id="G41978">
    <property type="entry name" value="G41978"/>
</dbReference>
<dbReference type="GO" id="GO:0005576">
    <property type="term" value="C:extracellular region"/>
    <property type="evidence" value="ECO:0007669"/>
    <property type="project" value="UniProtKB-SubCell"/>
</dbReference>
<dbReference type="GO" id="GO:0007218">
    <property type="term" value="P:neuropeptide signaling pathway"/>
    <property type="evidence" value="ECO:0007669"/>
    <property type="project" value="UniProtKB-KW"/>
</dbReference>
<accession>P41862</accession>
<sequence length="9" mass="1082">AXGQDFMRF</sequence>
<name>FAR7_CALVO</name>
<feature type="peptide" id="PRO_0000043669" description="CalliFMRFamide-7">
    <location>
        <begin position="1"/>
        <end position="9"/>
    </location>
</feature>
<feature type="modified residue" description="Phenylalanine amide" evidence="1">
    <location>
        <position position="9"/>
    </location>
</feature>
<reference key="1">
    <citation type="journal article" date="1992" name="Proc. Natl. Acad. Sci. U.S.A.">
        <title>Isolation, structure, and activity of -Phe-Met-Arg-Phe-NH2 neuropeptides (designated calliFMRFamides) from the blowfly Calliphora vomitoria.</title>
        <authorList>
            <person name="Duve H."/>
            <person name="Johnsen A.H."/>
            <person name="Sewell J.C."/>
            <person name="Scott A.G."/>
            <person name="Orchard I."/>
            <person name="Rehfeld J.F."/>
            <person name="Thorpe A."/>
        </authorList>
    </citation>
    <scope>PROTEIN SEQUENCE</scope>
    <scope>AMIDATION AT PHE-9</scope>
    <source>
        <tissue>Thoracic ganglion</tissue>
    </source>
</reference>
<organism>
    <name type="scientific">Calliphora vomitoria</name>
    <name type="common">Blue bottle fly</name>
    <name type="synonym">Musca vomitoria</name>
    <dbReference type="NCBI Taxonomy" id="27454"/>
    <lineage>
        <taxon>Eukaryota</taxon>
        <taxon>Metazoa</taxon>
        <taxon>Ecdysozoa</taxon>
        <taxon>Arthropoda</taxon>
        <taxon>Hexapoda</taxon>
        <taxon>Insecta</taxon>
        <taxon>Pterygota</taxon>
        <taxon>Neoptera</taxon>
        <taxon>Endopterygota</taxon>
        <taxon>Diptera</taxon>
        <taxon>Brachycera</taxon>
        <taxon>Muscomorpha</taxon>
        <taxon>Oestroidea</taxon>
        <taxon>Calliphoridae</taxon>
        <taxon>Calliphorinae</taxon>
        <taxon>Calliphora</taxon>
    </lineage>
</organism>
<evidence type="ECO:0000269" key="1">
    <source>
    </source>
</evidence>
<evidence type="ECO:0000305" key="2"/>
<comment type="subcellular location">
    <subcellularLocation>
        <location>Secreted</location>
    </subcellularLocation>
</comment>
<comment type="similarity">
    <text evidence="2">Belongs to the FARP (FMRFamide related peptide) family.</text>
</comment>
<protein>
    <recommendedName>
        <fullName>CalliFMRFamide-7</fullName>
    </recommendedName>
</protein>
<keyword id="KW-0027">Amidation</keyword>
<keyword id="KW-0903">Direct protein sequencing</keyword>
<keyword id="KW-0527">Neuropeptide</keyword>
<keyword id="KW-0964">Secreted</keyword>